<gene>
    <name evidence="11" type="primary">Exph5</name>
    <name evidence="9" type="synonym">Kiaa0624</name>
    <name evidence="11" type="synonym">Slac2b</name>
</gene>
<name>EXPH5_MOUSE</name>
<protein>
    <recommendedName>
        <fullName evidence="7">Exophilin-5</fullName>
    </recommendedName>
    <alternativeName>
        <fullName evidence="5">Synaptotagmin-like protein homolog lacking C2 domains b</fullName>
        <shortName evidence="5">SlaC2-b</shortName>
        <shortName evidence="5">Slp homolog lacking C2 domains b</shortName>
    </alternativeName>
</protein>
<organism>
    <name type="scientific">Mus musculus</name>
    <name type="common">Mouse</name>
    <dbReference type="NCBI Taxonomy" id="10090"/>
    <lineage>
        <taxon>Eukaryota</taxon>
        <taxon>Metazoa</taxon>
        <taxon>Chordata</taxon>
        <taxon>Craniata</taxon>
        <taxon>Vertebrata</taxon>
        <taxon>Euteleostomi</taxon>
        <taxon>Mammalia</taxon>
        <taxon>Eutheria</taxon>
        <taxon>Euarchontoglires</taxon>
        <taxon>Glires</taxon>
        <taxon>Rodentia</taxon>
        <taxon>Myomorpha</taxon>
        <taxon>Muroidea</taxon>
        <taxon>Muridae</taxon>
        <taxon>Murinae</taxon>
        <taxon>Mus</taxon>
        <taxon>Mus</taxon>
    </lineage>
</organism>
<dbReference type="EMBL" id="AB098163">
    <property type="protein sequence ID" value="BAC57424.1"/>
    <property type="molecule type" value="mRNA"/>
</dbReference>
<dbReference type="EMBL" id="BC120905">
    <property type="protein sequence ID" value="AAI20906.1"/>
    <property type="molecule type" value="mRNA"/>
</dbReference>
<dbReference type="EMBL" id="AK172984">
    <property type="protein sequence ID" value="BAD32262.1"/>
    <property type="molecule type" value="mRNA"/>
</dbReference>
<dbReference type="EMBL" id="AK143980">
    <property type="protein sequence ID" value="BAE25642.1"/>
    <property type="molecule type" value="mRNA"/>
</dbReference>
<dbReference type="CCDS" id="CCDS23181.1"/>
<dbReference type="RefSeq" id="NP_789816.2">
    <property type="nucleotide sequence ID" value="NM_176846.3"/>
</dbReference>
<dbReference type="RefSeq" id="XP_006510488.1">
    <property type="nucleotide sequence ID" value="XM_006510425.5"/>
</dbReference>
<dbReference type="SMR" id="Q0VAV2"/>
<dbReference type="BioGRID" id="235724">
    <property type="interactions" value="2"/>
</dbReference>
<dbReference type="FunCoup" id="Q0VAV2">
    <property type="interactions" value="165"/>
</dbReference>
<dbReference type="IntAct" id="Q0VAV2">
    <property type="interactions" value="1"/>
</dbReference>
<dbReference type="STRING" id="10090.ENSMUSP00000062632"/>
<dbReference type="GlyGen" id="Q0VAV2">
    <property type="glycosylation" value="2 sites, 2 N-linked glycans (2 sites)"/>
</dbReference>
<dbReference type="iPTMnet" id="Q0VAV2"/>
<dbReference type="PhosphoSitePlus" id="Q0VAV2"/>
<dbReference type="PaxDb" id="10090-ENSMUSP00000062632"/>
<dbReference type="PeptideAtlas" id="Q0VAV2"/>
<dbReference type="ProteomicsDB" id="275559"/>
<dbReference type="Antibodypedia" id="54955">
    <property type="antibodies" value="45 antibodies from 14 providers"/>
</dbReference>
<dbReference type="Ensembl" id="ENSMUST00000051014.2">
    <property type="protein sequence ID" value="ENSMUSP00000062632.2"/>
    <property type="gene ID" value="ENSMUSG00000034584.4"/>
</dbReference>
<dbReference type="GeneID" id="320051"/>
<dbReference type="KEGG" id="mmu:320051"/>
<dbReference type="UCSC" id="uc009pma.2">
    <property type="organism name" value="mouse"/>
</dbReference>
<dbReference type="AGR" id="MGI:2443248"/>
<dbReference type="CTD" id="23086"/>
<dbReference type="MGI" id="MGI:2443248">
    <property type="gene designation" value="Exph5"/>
</dbReference>
<dbReference type="VEuPathDB" id="HostDB:ENSMUSG00000034584"/>
<dbReference type="eggNOG" id="ENOG502RVAY">
    <property type="taxonomic scope" value="Eukaryota"/>
</dbReference>
<dbReference type="GeneTree" id="ENSGT00390000011087"/>
<dbReference type="HOGENOM" id="CLU_001683_0_0_1"/>
<dbReference type="InParanoid" id="Q0VAV2"/>
<dbReference type="OMA" id="HKNRYNE"/>
<dbReference type="OrthoDB" id="9908998at2759"/>
<dbReference type="PhylomeDB" id="Q0VAV2"/>
<dbReference type="TreeFam" id="TF335662"/>
<dbReference type="BioGRID-ORCS" id="320051">
    <property type="hits" value="3 hits in 77 CRISPR screens"/>
</dbReference>
<dbReference type="ChiTaRS" id="Exph5">
    <property type="organism name" value="mouse"/>
</dbReference>
<dbReference type="PRO" id="PR:Q0VAV2"/>
<dbReference type="Proteomes" id="UP000000589">
    <property type="component" value="Chromosome 9"/>
</dbReference>
<dbReference type="RNAct" id="Q0VAV2">
    <property type="molecule type" value="protein"/>
</dbReference>
<dbReference type="Bgee" id="ENSMUSG00000034584">
    <property type="expression patterns" value="Expressed in cerebellar cortex and 46 other cell types or tissues"/>
</dbReference>
<dbReference type="GO" id="GO:0005768">
    <property type="term" value="C:endosome"/>
    <property type="evidence" value="ECO:0000250"/>
    <property type="project" value="UniProtKB"/>
</dbReference>
<dbReference type="GO" id="GO:0031267">
    <property type="term" value="F:small GTPase binding"/>
    <property type="evidence" value="ECO:0000250"/>
    <property type="project" value="UniProtKB"/>
</dbReference>
<dbReference type="GO" id="GO:0006886">
    <property type="term" value="P:intracellular protein transport"/>
    <property type="evidence" value="ECO:0007669"/>
    <property type="project" value="InterPro"/>
</dbReference>
<dbReference type="GO" id="GO:0003334">
    <property type="term" value="P:keratinocyte development"/>
    <property type="evidence" value="ECO:0000250"/>
    <property type="project" value="UniProtKB"/>
</dbReference>
<dbReference type="GO" id="GO:0071985">
    <property type="term" value="P:multivesicular body sorting pathway"/>
    <property type="evidence" value="ECO:0000250"/>
    <property type="project" value="UniProtKB"/>
</dbReference>
<dbReference type="GO" id="GO:0045921">
    <property type="term" value="P:positive regulation of exocytosis"/>
    <property type="evidence" value="ECO:0000250"/>
    <property type="project" value="UniProtKB"/>
</dbReference>
<dbReference type="GO" id="GO:0050714">
    <property type="term" value="P:positive regulation of protein secretion"/>
    <property type="evidence" value="ECO:0000250"/>
    <property type="project" value="UniProtKB"/>
</dbReference>
<dbReference type="Gene3D" id="6.10.250.3000">
    <property type="match status" value="1"/>
</dbReference>
<dbReference type="InterPro" id="IPR039916">
    <property type="entry name" value="EXPH5"/>
</dbReference>
<dbReference type="InterPro" id="IPR010911">
    <property type="entry name" value="Rab_BD"/>
</dbReference>
<dbReference type="PANTHER" id="PTHR21469">
    <property type="entry name" value="EXOPHILIN-5"/>
    <property type="match status" value="1"/>
</dbReference>
<dbReference type="PANTHER" id="PTHR21469:SF4">
    <property type="entry name" value="EXOPHILIN-5"/>
    <property type="match status" value="1"/>
</dbReference>
<dbReference type="PROSITE" id="PS50916">
    <property type="entry name" value="RABBD"/>
    <property type="match status" value="1"/>
</dbReference>
<sequence length="1960" mass="217643">MTKVPQGFDFSFLNEEEARKILQVLERNEELRRAEKDRISKLQKTKRDIRWLQGATGEWFEEIQRKKFCNETDVNQMLKPPLTYRLQKGMAKNDPMELQTPRSKSLINQKPSVSSRMSFRSSFASLFSFRRPAKETLKLQSPRPNRCDERVRPSASVRGTASAKIYNSPVGNQPVASVFVPKPAIMREESGMPPPWDASLLESEFFQVLDDLDNKLAQEQSSGLMNTRVPFNYGSRTQFKLSHRNSHGHSTGRQQNYHSETSNMSIYNILRPGTPREGFKTFSPRTKTIYDMYRTREPRVLKEDFMQKNAFGSASLCFDSRQRSASPATGSFTARSLHFPADTQNKSSFTPVRHQQSPKRTPLSSIIWNRSDASRHRQNQEESLGVQAPMDIDPEEQYVSPRCFQESRRYEMCHSQNAYQSYPLNVPVANAMSPDTLENSENMPFYRQSNPFARSFFSSTFRQSREQRFGQNSFWSRQEEYSSWSDFPQSRGPFPSSDKDFEMFSVEANRAPSVCSQGVPSQHWRSHSSGHGTYVFRGREDSHCWRSDFQTSPLESMDTSHVNENQHPPHFVTPVGFSITDSSCHLQSSRLDSQQGYFPVEEAVDEDPYLCGKAQTPASSFRTPFPLSPDDGRESQSSSFPDSTATLQKIIPNKPDFLPIRNCTEVPVACSHSTDSLSLTDTQPNIPVTETNSEKDMDVSVSKDEQLNKTGQKSRPTGLPQYVLHTVISNDLPDFQNAHSRDSAQNDRYGFNAPATERSRRSPRVFSRKGTSQIHTTQRDQSNKLSKNKCFGGDRTLDSAASPPFIQESGTATSLPSPNQGCHQKTGSNEESSNTIKNSHWCFESTANQKSQPSREPALLDLEQSLSTHSTNDSKLAPGHSISRAPLHVASDAPQESFLDARLVPSTTVFSRSLSDQDPGQEQREEKDKATKSQDNQLAVNSTDNQESHDSPALPHDAVHCHPYSPFKNGRGKGRVRRRVSCIEKLTKTERAAAPTREGSGCAEDQRSIKDPELSTVYCTLPRKPASFLIHSRQQESKGTVASVRNGPLPFQIKNKAEVPTGKSTSDKPSSPESVSDAANAVSGTPKATKKMTDMKAIRSASVRKGPLPFLIKRAISCPSGEPCSLAESDDRQKSSVLGMDASPVIPRPGGRIFNSLEGEPSFRESAFSEKELAQEHTGKDRELRAPRMGLFNPSKKTPERLCATGSGKESGRALHKFKTTSMFSVSGDEENVNCLEVVSIYYTLPRKPSKKFCSLLQQYTQGTDSLRDAFQGETEALPNALEIDELNCPAQVQSGIPPPQDPKMQVDSAPCCLSHSPESKDVSQLPDRETSKSTLEEMTSVGPDVSLHREEPTTKEISPSNVSKTAIDDSLSREKREKELLRQILRAPLLHQEKGAGKEHTKSHQQPSKGGNSGPSGLPSRSEDNDENSQTRRDSGTCAGGMASGNGQYPWRDHMAAVVGDRSSRSQPRETSGTTGSDCQNPTDKMLSDSESQAFALTPALCKLQLAEEAQPGGAGLQSEASQAGSQETNTAEMRKVEDEEHMLTRDQTLLPRGNNKNKTNTDETKDRYSGKHRLAAISKASKRIPAKDLSPRKHVATIFSQSESESGFRRLSLYRPEDNPLSPEPTVKATESTDESSQMNVDKSETLLQETTVSSPGPPGQPCHQKSASILQPHLNGSPGVLETPPKSEGSKTQISGELGAPAQLTLTSPLEKGAGHQQRLSPPFPLEPTQKSTINSHCQLRHRSAPSPESEPEPHLYRSKSLKNFNVQSDLLCASHPPKARGRHFSENTSIDNALSQLSLEDGSFPNSGYNRRFKSSSELPASYESESWTSYSNRTRGPKSTSSISRPIDYGIFGKEQQLAFLENVKRSLTQGRLWKPSFLKNPGFLKDDVLNASNLSQSELVNSPAGQAPEDGVFPSEPLNIYKDDPVEPLVSDWDTDTTTDDEYYLDEKDKESEL</sequence>
<evidence type="ECO:0000250" key="1">
    <source>
        <dbReference type="UniProtKB" id="Q8NEV8"/>
    </source>
</evidence>
<evidence type="ECO:0000255" key="2">
    <source>
        <dbReference type="PROSITE-ProRule" id="PRU00234"/>
    </source>
</evidence>
<evidence type="ECO:0000256" key="3">
    <source>
        <dbReference type="SAM" id="MobiDB-lite"/>
    </source>
</evidence>
<evidence type="ECO:0000269" key="4">
    <source>
    </source>
</evidence>
<evidence type="ECO:0000303" key="5">
    <source>
    </source>
</evidence>
<evidence type="ECO:0000305" key="6"/>
<evidence type="ECO:0000312" key="7">
    <source>
        <dbReference type="EMBL" id="AAI20906.1"/>
    </source>
</evidence>
<evidence type="ECO:0000312" key="8">
    <source>
        <dbReference type="EMBL" id="BAC57424.1"/>
    </source>
</evidence>
<evidence type="ECO:0000312" key="9">
    <source>
        <dbReference type="EMBL" id="BAD32262.1"/>
    </source>
</evidence>
<evidence type="ECO:0000312" key="10">
    <source>
        <dbReference type="EMBL" id="BAE25642.1"/>
    </source>
</evidence>
<evidence type="ECO:0000312" key="11">
    <source>
        <dbReference type="MGI" id="MGI:2443248"/>
    </source>
</evidence>
<reference evidence="8" key="1">
    <citation type="journal article" date="2003" name="J. Biol. Chem.">
        <title>Slp4-a/granuphilin-a inhibits dense-core vesicle exocytosis through interaction with the GDP-bound form of Rab27A in PC12 cells.</title>
        <authorList>
            <person name="Fukuda M."/>
        </authorList>
    </citation>
    <scope>NUCLEOTIDE SEQUENCE [MRNA]</scope>
    <source>
        <strain evidence="8">BALB/cJ</strain>
        <tissue evidence="8">Spleen</tissue>
    </source>
</reference>
<reference evidence="7" key="2">
    <citation type="journal article" date="2004" name="Genome Res.">
        <title>The status, quality, and expansion of the NIH full-length cDNA project: the Mammalian Gene Collection (MGC).</title>
        <authorList>
            <consortium name="The MGC Project Team"/>
        </authorList>
    </citation>
    <scope>NUCLEOTIDE SEQUENCE [LARGE SCALE MRNA]</scope>
</reference>
<reference evidence="6 9" key="3">
    <citation type="journal article" date="2004" name="DNA Res.">
        <title>Prediction of the coding sequences of mouse homologues of KIAA gene: IV. The complete nucleotide sequences of 500 mouse KIAA-homologous cDNAs identified by screening of terminal sequences of cDNA clones randomly sampled from size-fractionated libraries.</title>
        <authorList>
            <person name="Okazaki N."/>
            <person name="Kikuno R."/>
            <person name="Ohara R."/>
            <person name="Inamoto S."/>
            <person name="Koseki H."/>
            <person name="Hiraoka S."/>
            <person name="Saga Y."/>
            <person name="Seino S."/>
            <person name="Nishimura M."/>
            <person name="Kaisho T."/>
            <person name="Hoshino K."/>
            <person name="Kitamura H."/>
            <person name="Nagase T."/>
            <person name="Ohara O."/>
            <person name="Koga H."/>
        </authorList>
    </citation>
    <scope>NUCLEOTIDE SEQUENCE [LARGE SCALE MRNA] OF 338-1960</scope>
    <source>
        <tissue evidence="9">Pancreatic islet</tissue>
    </source>
</reference>
<reference evidence="6 10" key="4">
    <citation type="journal article" date="2005" name="Science">
        <title>The transcriptional landscape of the mammalian genome.</title>
        <authorList>
            <person name="Carninci P."/>
            <person name="Kasukawa T."/>
            <person name="Katayama S."/>
            <person name="Gough J."/>
            <person name="Frith M.C."/>
            <person name="Maeda N."/>
            <person name="Oyama R."/>
            <person name="Ravasi T."/>
            <person name="Lenhard B."/>
            <person name="Wells C."/>
            <person name="Kodzius R."/>
            <person name="Shimokawa K."/>
            <person name="Bajic V.B."/>
            <person name="Brenner S.E."/>
            <person name="Batalov S."/>
            <person name="Forrest A.R."/>
            <person name="Zavolan M."/>
            <person name="Davis M.J."/>
            <person name="Wilming L.G."/>
            <person name="Aidinis V."/>
            <person name="Allen J.E."/>
            <person name="Ambesi-Impiombato A."/>
            <person name="Apweiler R."/>
            <person name="Aturaliya R.N."/>
            <person name="Bailey T.L."/>
            <person name="Bansal M."/>
            <person name="Baxter L."/>
            <person name="Beisel K.W."/>
            <person name="Bersano T."/>
            <person name="Bono H."/>
            <person name="Chalk A.M."/>
            <person name="Chiu K.P."/>
            <person name="Choudhary V."/>
            <person name="Christoffels A."/>
            <person name="Clutterbuck D.R."/>
            <person name="Crowe M.L."/>
            <person name="Dalla E."/>
            <person name="Dalrymple B.P."/>
            <person name="de Bono B."/>
            <person name="Della Gatta G."/>
            <person name="di Bernardo D."/>
            <person name="Down T."/>
            <person name="Engstrom P."/>
            <person name="Fagiolini M."/>
            <person name="Faulkner G."/>
            <person name="Fletcher C.F."/>
            <person name="Fukushima T."/>
            <person name="Furuno M."/>
            <person name="Futaki S."/>
            <person name="Gariboldi M."/>
            <person name="Georgii-Hemming P."/>
            <person name="Gingeras T.R."/>
            <person name="Gojobori T."/>
            <person name="Green R.E."/>
            <person name="Gustincich S."/>
            <person name="Harbers M."/>
            <person name="Hayashi Y."/>
            <person name="Hensch T.K."/>
            <person name="Hirokawa N."/>
            <person name="Hill D."/>
            <person name="Huminiecki L."/>
            <person name="Iacono M."/>
            <person name="Ikeo K."/>
            <person name="Iwama A."/>
            <person name="Ishikawa T."/>
            <person name="Jakt M."/>
            <person name="Kanapin A."/>
            <person name="Katoh M."/>
            <person name="Kawasawa Y."/>
            <person name="Kelso J."/>
            <person name="Kitamura H."/>
            <person name="Kitano H."/>
            <person name="Kollias G."/>
            <person name="Krishnan S.P."/>
            <person name="Kruger A."/>
            <person name="Kummerfeld S.K."/>
            <person name="Kurochkin I.V."/>
            <person name="Lareau L.F."/>
            <person name="Lazarevic D."/>
            <person name="Lipovich L."/>
            <person name="Liu J."/>
            <person name="Liuni S."/>
            <person name="McWilliam S."/>
            <person name="Madan Babu M."/>
            <person name="Madera M."/>
            <person name="Marchionni L."/>
            <person name="Matsuda H."/>
            <person name="Matsuzawa S."/>
            <person name="Miki H."/>
            <person name="Mignone F."/>
            <person name="Miyake S."/>
            <person name="Morris K."/>
            <person name="Mottagui-Tabar S."/>
            <person name="Mulder N."/>
            <person name="Nakano N."/>
            <person name="Nakauchi H."/>
            <person name="Ng P."/>
            <person name="Nilsson R."/>
            <person name="Nishiguchi S."/>
            <person name="Nishikawa S."/>
            <person name="Nori F."/>
            <person name="Ohara O."/>
            <person name="Okazaki Y."/>
            <person name="Orlando V."/>
            <person name="Pang K.C."/>
            <person name="Pavan W.J."/>
            <person name="Pavesi G."/>
            <person name="Pesole G."/>
            <person name="Petrovsky N."/>
            <person name="Piazza S."/>
            <person name="Reed J."/>
            <person name="Reid J.F."/>
            <person name="Ring B.Z."/>
            <person name="Ringwald M."/>
            <person name="Rost B."/>
            <person name="Ruan Y."/>
            <person name="Salzberg S.L."/>
            <person name="Sandelin A."/>
            <person name="Schneider C."/>
            <person name="Schoenbach C."/>
            <person name="Sekiguchi K."/>
            <person name="Semple C.A."/>
            <person name="Seno S."/>
            <person name="Sessa L."/>
            <person name="Sheng Y."/>
            <person name="Shibata Y."/>
            <person name="Shimada H."/>
            <person name="Shimada K."/>
            <person name="Silva D."/>
            <person name="Sinclair B."/>
            <person name="Sperling S."/>
            <person name="Stupka E."/>
            <person name="Sugiura K."/>
            <person name="Sultana R."/>
            <person name="Takenaka Y."/>
            <person name="Taki K."/>
            <person name="Tammoja K."/>
            <person name="Tan S.L."/>
            <person name="Tang S."/>
            <person name="Taylor M.S."/>
            <person name="Tegner J."/>
            <person name="Teichmann S.A."/>
            <person name="Ueda H.R."/>
            <person name="van Nimwegen E."/>
            <person name="Verardo R."/>
            <person name="Wei C.L."/>
            <person name="Yagi K."/>
            <person name="Yamanishi H."/>
            <person name="Zabarovsky E."/>
            <person name="Zhu S."/>
            <person name="Zimmer A."/>
            <person name="Hide W."/>
            <person name="Bult C."/>
            <person name="Grimmond S.M."/>
            <person name="Teasdale R.D."/>
            <person name="Liu E.T."/>
            <person name="Brusic V."/>
            <person name="Quackenbush J."/>
            <person name="Wahlestedt C."/>
            <person name="Mattick J.S."/>
            <person name="Hume D.A."/>
            <person name="Kai C."/>
            <person name="Sasaki D."/>
            <person name="Tomaru Y."/>
            <person name="Fukuda S."/>
            <person name="Kanamori-Katayama M."/>
            <person name="Suzuki M."/>
            <person name="Aoki J."/>
            <person name="Arakawa T."/>
            <person name="Iida J."/>
            <person name="Imamura K."/>
            <person name="Itoh M."/>
            <person name="Kato T."/>
            <person name="Kawaji H."/>
            <person name="Kawagashira N."/>
            <person name="Kawashima T."/>
            <person name="Kojima M."/>
            <person name="Kondo S."/>
            <person name="Konno H."/>
            <person name="Nakano K."/>
            <person name="Ninomiya N."/>
            <person name="Nishio T."/>
            <person name="Okada M."/>
            <person name="Plessy C."/>
            <person name="Shibata K."/>
            <person name="Shiraki T."/>
            <person name="Suzuki S."/>
            <person name="Tagami M."/>
            <person name="Waki K."/>
            <person name="Watahiki A."/>
            <person name="Okamura-Oho Y."/>
            <person name="Suzuki H."/>
            <person name="Kawai J."/>
            <person name="Hayashizaki Y."/>
        </authorList>
    </citation>
    <scope>NUCLEOTIDE SEQUENCE [LARGE SCALE MRNA] OF 749-1553</scope>
    <source>
        <strain evidence="10">C57BL/6J</strain>
        <tissue evidence="10">Kidney</tissue>
    </source>
</reference>
<reference evidence="6" key="5">
    <citation type="journal article" date="2002" name="J. Biol. Chem.">
        <title>The Slp homology domain of synaptotagmin-like proteins 1-4 and Slac2 functions as a novel Rab27A binding domain.</title>
        <authorList>
            <person name="Kuroda T.S."/>
            <person name="Fukuda M."/>
            <person name="Ariga H."/>
            <person name="Mikoshiba K."/>
        </authorList>
    </citation>
    <scope>INTERACTION WITH RAB27A</scope>
</reference>
<accession>Q0VAV2</accession>
<accession>Q3UNV5</accession>
<accession>Q6A034</accession>
<accession>Q812E3</accession>
<comment type="function">
    <text evidence="1">May act as Rab effector protein and play a role in vesicle trafficking.</text>
</comment>
<comment type="subunit">
    <text evidence="4">Interacts with RAB27A.</text>
</comment>
<proteinExistence type="evidence at protein level"/>
<keyword id="KW-0597">Phosphoprotein</keyword>
<keyword id="KW-1185">Reference proteome</keyword>
<feature type="chain" id="PRO_0000355582" description="Exophilin-5">
    <location>
        <begin position="1"/>
        <end position="1960"/>
    </location>
</feature>
<feature type="domain" description="RabBD" evidence="2">
    <location>
        <begin position="7"/>
        <end position="63"/>
    </location>
</feature>
<feature type="region of interest" description="Disordered" evidence="3">
    <location>
        <begin position="325"/>
        <end position="366"/>
    </location>
</feature>
<feature type="region of interest" description="Disordered" evidence="3">
    <location>
        <begin position="616"/>
        <end position="645"/>
    </location>
</feature>
<feature type="region of interest" description="Disordered" evidence="3">
    <location>
        <begin position="672"/>
        <end position="720"/>
    </location>
</feature>
<feature type="region of interest" description="Disordered" evidence="3">
    <location>
        <begin position="734"/>
        <end position="835"/>
    </location>
</feature>
<feature type="region of interest" description="Disordered" evidence="3">
    <location>
        <begin position="910"/>
        <end position="976"/>
    </location>
</feature>
<feature type="region of interest" description="Disordered" evidence="3">
    <location>
        <begin position="1035"/>
        <end position="1095"/>
    </location>
</feature>
<feature type="region of interest" description="Disordered" evidence="3">
    <location>
        <begin position="1291"/>
        <end position="1375"/>
    </location>
</feature>
<feature type="region of interest" description="Disordered" evidence="3">
    <location>
        <begin position="1389"/>
        <end position="1493"/>
    </location>
</feature>
<feature type="region of interest" description="Disordered" evidence="3">
    <location>
        <begin position="1510"/>
        <end position="1759"/>
    </location>
</feature>
<feature type="region of interest" description="Disordered" evidence="3">
    <location>
        <begin position="1828"/>
        <end position="1847"/>
    </location>
</feature>
<feature type="region of interest" description="Disordered" evidence="3">
    <location>
        <begin position="1906"/>
        <end position="1960"/>
    </location>
</feature>
<feature type="compositionally biased region" description="Polar residues" evidence="3">
    <location>
        <begin position="325"/>
        <end position="334"/>
    </location>
</feature>
<feature type="compositionally biased region" description="Polar residues" evidence="3">
    <location>
        <begin position="342"/>
        <end position="366"/>
    </location>
</feature>
<feature type="compositionally biased region" description="Polar residues" evidence="3">
    <location>
        <begin position="635"/>
        <end position="645"/>
    </location>
</feature>
<feature type="compositionally biased region" description="Low complexity" evidence="3">
    <location>
        <begin position="673"/>
        <end position="682"/>
    </location>
</feature>
<feature type="compositionally biased region" description="Basic and acidic residues" evidence="3">
    <location>
        <begin position="692"/>
        <end position="707"/>
    </location>
</feature>
<feature type="compositionally biased region" description="Polar residues" evidence="3">
    <location>
        <begin position="808"/>
        <end position="835"/>
    </location>
</feature>
<feature type="compositionally biased region" description="Polar residues" evidence="3">
    <location>
        <begin position="910"/>
        <end position="920"/>
    </location>
</feature>
<feature type="compositionally biased region" description="Basic and acidic residues" evidence="3">
    <location>
        <begin position="921"/>
        <end position="932"/>
    </location>
</feature>
<feature type="compositionally biased region" description="Polar residues" evidence="3">
    <location>
        <begin position="933"/>
        <end position="945"/>
    </location>
</feature>
<feature type="compositionally biased region" description="Polar residues" evidence="3">
    <location>
        <begin position="1062"/>
        <end position="1074"/>
    </location>
</feature>
<feature type="compositionally biased region" description="Basic and acidic residues" evidence="3">
    <location>
        <begin position="1318"/>
        <end position="1336"/>
    </location>
</feature>
<feature type="compositionally biased region" description="Polar residues" evidence="3">
    <location>
        <begin position="1356"/>
        <end position="1365"/>
    </location>
</feature>
<feature type="compositionally biased region" description="Basic and acidic residues" evidence="3">
    <location>
        <begin position="1392"/>
        <end position="1403"/>
    </location>
</feature>
<feature type="compositionally biased region" description="Polar residues" evidence="3">
    <location>
        <begin position="1470"/>
        <end position="1493"/>
    </location>
</feature>
<feature type="compositionally biased region" description="Polar residues" evidence="3">
    <location>
        <begin position="1520"/>
        <end position="1533"/>
    </location>
</feature>
<feature type="compositionally biased region" description="Basic and acidic residues" evidence="3">
    <location>
        <begin position="1534"/>
        <end position="1546"/>
    </location>
</feature>
<feature type="compositionally biased region" description="Basic and acidic residues" evidence="3">
    <location>
        <begin position="1561"/>
        <end position="1571"/>
    </location>
</feature>
<feature type="compositionally biased region" description="Basic residues" evidence="3">
    <location>
        <begin position="1572"/>
        <end position="1586"/>
    </location>
</feature>
<feature type="compositionally biased region" description="Polar residues" evidence="3">
    <location>
        <begin position="1637"/>
        <end position="1657"/>
    </location>
</feature>
<feature type="compositionally biased region" description="Polar residues" evidence="3">
    <location>
        <begin position="1732"/>
        <end position="1741"/>
    </location>
</feature>
<feature type="compositionally biased region" description="Acidic residues" evidence="3">
    <location>
        <begin position="1939"/>
        <end position="1950"/>
    </location>
</feature>
<feature type="compositionally biased region" description="Basic and acidic residues" evidence="3">
    <location>
        <begin position="1951"/>
        <end position="1960"/>
    </location>
</feature>
<feature type="modified residue" description="Phosphoserine" evidence="1">
    <location>
        <position position="799"/>
    </location>
</feature>
<feature type="modified residue" description="Phosphoserine" evidence="1">
    <location>
        <position position="802"/>
    </location>
</feature>
<feature type="modified residue" description="Phosphoserine" evidence="1">
    <location>
        <position position="1027"/>
    </location>
</feature>
<feature type="modified residue" description="Phosphoserine" evidence="1">
    <location>
        <position position="1083"/>
    </location>
</feature>
<feature type="modified residue" description="Phosphoserine" evidence="1">
    <location>
        <position position="1117"/>
    </location>
</feature>
<feature type="modified residue" description="Phosphoserine" evidence="1">
    <location>
        <position position="1493"/>
    </location>
</feature>
<feature type="modified residue" description="Phosphoserine" evidence="1">
    <location>
        <position position="1724"/>
    </location>
</feature>
<feature type="modified residue" description="Phosphoserine" evidence="1">
    <location>
        <position position="1739"/>
    </location>
</feature>
<feature type="modified residue" description="Phosphoserine" evidence="1">
    <location>
        <position position="1789"/>
    </location>
</feature>
<feature type="modified residue" description="Phosphoserine" evidence="1">
    <location>
        <position position="1819"/>
    </location>
</feature>
<feature type="sequence conflict" description="In Ref. 3; BAD32262." evidence="6" ref="3">
    <original>A</original>
    <variation>V</variation>
    <location>
        <position position="1717"/>
    </location>
</feature>
<feature type="sequence conflict" description="In Ref. 1; BAC57424." evidence="6" ref="1">
    <original>V</original>
    <variation>D</variation>
    <location>
        <position position="1936"/>
    </location>
</feature>